<evidence type="ECO:0000250" key="1"/>
<dbReference type="EC" id="2.6.1.16"/>
<dbReference type="EMBL" id="BA000040">
    <property type="protein sequence ID" value="BAC49872.1"/>
    <property type="molecule type" value="Genomic_DNA"/>
</dbReference>
<dbReference type="RefSeq" id="NP_771247.1">
    <property type="nucleotide sequence ID" value="NC_004463.1"/>
</dbReference>
<dbReference type="RefSeq" id="WP_011087378.1">
    <property type="nucleotide sequence ID" value="NC_004463.1"/>
</dbReference>
<dbReference type="SMR" id="P59362"/>
<dbReference type="FunCoup" id="P59362">
    <property type="interactions" value="561"/>
</dbReference>
<dbReference type="STRING" id="224911.AAV28_20270"/>
<dbReference type="EnsemblBacteria" id="BAC49872">
    <property type="protein sequence ID" value="BAC49872"/>
    <property type="gene ID" value="BAC49872"/>
</dbReference>
<dbReference type="GeneID" id="46491617"/>
<dbReference type="KEGG" id="bja:bll4607"/>
<dbReference type="PATRIC" id="fig|224911.44.peg.4408"/>
<dbReference type="eggNOG" id="COG0449">
    <property type="taxonomic scope" value="Bacteria"/>
</dbReference>
<dbReference type="HOGENOM" id="CLU_012520_5_2_5"/>
<dbReference type="InParanoid" id="P59362"/>
<dbReference type="OrthoDB" id="9761808at2"/>
<dbReference type="PhylomeDB" id="P59362"/>
<dbReference type="Proteomes" id="UP000002526">
    <property type="component" value="Chromosome"/>
</dbReference>
<dbReference type="GO" id="GO:0005829">
    <property type="term" value="C:cytosol"/>
    <property type="evidence" value="ECO:0000318"/>
    <property type="project" value="GO_Central"/>
</dbReference>
<dbReference type="GO" id="GO:0097367">
    <property type="term" value="F:carbohydrate derivative binding"/>
    <property type="evidence" value="ECO:0007669"/>
    <property type="project" value="InterPro"/>
</dbReference>
<dbReference type="GO" id="GO:0004360">
    <property type="term" value="F:glutamine-fructose-6-phosphate transaminase (isomerizing) activity"/>
    <property type="evidence" value="ECO:0000318"/>
    <property type="project" value="GO_Central"/>
</dbReference>
<dbReference type="GO" id="GO:0005975">
    <property type="term" value="P:carbohydrate metabolic process"/>
    <property type="evidence" value="ECO:0007669"/>
    <property type="project" value="UniProtKB-UniRule"/>
</dbReference>
<dbReference type="GO" id="GO:0006002">
    <property type="term" value="P:fructose 6-phosphate metabolic process"/>
    <property type="evidence" value="ECO:0000318"/>
    <property type="project" value="GO_Central"/>
</dbReference>
<dbReference type="GO" id="GO:0006487">
    <property type="term" value="P:protein N-linked glycosylation"/>
    <property type="evidence" value="ECO:0000318"/>
    <property type="project" value="GO_Central"/>
</dbReference>
<dbReference type="GO" id="GO:0006047">
    <property type="term" value="P:UDP-N-acetylglucosamine metabolic process"/>
    <property type="evidence" value="ECO:0000318"/>
    <property type="project" value="GO_Central"/>
</dbReference>
<dbReference type="CDD" id="cd00714">
    <property type="entry name" value="GFAT"/>
    <property type="match status" value="1"/>
</dbReference>
<dbReference type="CDD" id="cd05008">
    <property type="entry name" value="SIS_GlmS_GlmD_1"/>
    <property type="match status" value="1"/>
</dbReference>
<dbReference type="CDD" id="cd05009">
    <property type="entry name" value="SIS_GlmS_GlmD_2"/>
    <property type="match status" value="1"/>
</dbReference>
<dbReference type="FunFam" id="3.40.50.10490:FF:000001">
    <property type="entry name" value="Glutamine--fructose-6-phosphate aminotransferase [isomerizing]"/>
    <property type="match status" value="1"/>
</dbReference>
<dbReference type="FunFam" id="3.40.50.10490:FF:000057">
    <property type="entry name" value="Glutamine--fructose-6-phosphate aminotransferase [isomerizing]"/>
    <property type="match status" value="1"/>
</dbReference>
<dbReference type="FunFam" id="3.60.20.10:FF:000006">
    <property type="entry name" value="Glutamine--fructose-6-phosphate aminotransferase [isomerizing]"/>
    <property type="match status" value="1"/>
</dbReference>
<dbReference type="Gene3D" id="3.40.50.10490">
    <property type="entry name" value="Glucose-6-phosphate isomerase like protein, domain 1"/>
    <property type="match status" value="2"/>
</dbReference>
<dbReference type="Gene3D" id="3.60.20.10">
    <property type="entry name" value="Glutamine Phosphoribosylpyrophosphate, subunit 1, domain 1"/>
    <property type="match status" value="1"/>
</dbReference>
<dbReference type="HAMAP" id="MF_00164">
    <property type="entry name" value="GlmS"/>
    <property type="match status" value="1"/>
</dbReference>
<dbReference type="InterPro" id="IPR017932">
    <property type="entry name" value="GATase_2_dom"/>
</dbReference>
<dbReference type="InterPro" id="IPR005855">
    <property type="entry name" value="GFAT"/>
</dbReference>
<dbReference type="InterPro" id="IPR047084">
    <property type="entry name" value="GFAT_N"/>
</dbReference>
<dbReference type="InterPro" id="IPR035466">
    <property type="entry name" value="GlmS/AgaS_SIS"/>
</dbReference>
<dbReference type="InterPro" id="IPR035490">
    <property type="entry name" value="GlmS/FrlB_SIS"/>
</dbReference>
<dbReference type="InterPro" id="IPR029055">
    <property type="entry name" value="Ntn_hydrolases_N"/>
</dbReference>
<dbReference type="InterPro" id="IPR001347">
    <property type="entry name" value="SIS_dom"/>
</dbReference>
<dbReference type="InterPro" id="IPR046348">
    <property type="entry name" value="SIS_dom_sf"/>
</dbReference>
<dbReference type="NCBIfam" id="TIGR01135">
    <property type="entry name" value="glmS"/>
    <property type="match status" value="1"/>
</dbReference>
<dbReference type="NCBIfam" id="NF001484">
    <property type="entry name" value="PRK00331.1"/>
    <property type="match status" value="1"/>
</dbReference>
<dbReference type="PANTHER" id="PTHR10937">
    <property type="entry name" value="GLUCOSAMINE--FRUCTOSE-6-PHOSPHATE AMINOTRANSFERASE, ISOMERIZING"/>
    <property type="match status" value="1"/>
</dbReference>
<dbReference type="PANTHER" id="PTHR10937:SF0">
    <property type="entry name" value="GLUTAMINE--FRUCTOSE-6-PHOSPHATE TRANSAMINASE (ISOMERIZING)"/>
    <property type="match status" value="1"/>
</dbReference>
<dbReference type="Pfam" id="PF13522">
    <property type="entry name" value="GATase_6"/>
    <property type="match status" value="1"/>
</dbReference>
<dbReference type="Pfam" id="PF01380">
    <property type="entry name" value="SIS"/>
    <property type="match status" value="2"/>
</dbReference>
<dbReference type="SUPFAM" id="SSF56235">
    <property type="entry name" value="N-terminal nucleophile aminohydrolases (Ntn hydrolases)"/>
    <property type="match status" value="1"/>
</dbReference>
<dbReference type="SUPFAM" id="SSF53697">
    <property type="entry name" value="SIS domain"/>
    <property type="match status" value="1"/>
</dbReference>
<dbReference type="PROSITE" id="PS51278">
    <property type="entry name" value="GATASE_TYPE_2"/>
    <property type="match status" value="1"/>
</dbReference>
<dbReference type="PROSITE" id="PS51464">
    <property type="entry name" value="SIS"/>
    <property type="match status" value="2"/>
</dbReference>
<proteinExistence type="inferred from homology"/>
<keyword id="KW-0032">Aminotransferase</keyword>
<keyword id="KW-0963">Cytoplasm</keyword>
<keyword id="KW-0315">Glutamine amidotransferase</keyword>
<keyword id="KW-1185">Reference proteome</keyword>
<keyword id="KW-0677">Repeat</keyword>
<keyword id="KW-0808">Transferase</keyword>
<comment type="function">
    <text evidence="1">Catalyzes the first step in hexosamine metabolism, converting fructose-6P into glucosamine-6P using glutamine as a nitrogen source.</text>
</comment>
<comment type="catalytic activity">
    <reaction>
        <text>D-fructose 6-phosphate + L-glutamine = D-glucosamine 6-phosphate + L-glutamate</text>
        <dbReference type="Rhea" id="RHEA:13237"/>
        <dbReference type="ChEBI" id="CHEBI:29985"/>
        <dbReference type="ChEBI" id="CHEBI:58359"/>
        <dbReference type="ChEBI" id="CHEBI:58725"/>
        <dbReference type="ChEBI" id="CHEBI:61527"/>
        <dbReference type="EC" id="2.6.1.16"/>
    </reaction>
</comment>
<comment type="subunit">
    <text evidence="1">Homodimer.</text>
</comment>
<comment type="subcellular location">
    <subcellularLocation>
        <location evidence="1">Cytoplasm</location>
    </subcellularLocation>
</comment>
<protein>
    <recommendedName>
        <fullName>Glutamine--fructose-6-phosphate aminotransferase [isomerizing]</fullName>
        <ecNumber>2.6.1.16</ecNumber>
    </recommendedName>
    <alternativeName>
        <fullName>D-fructose-6-phosphate amidotransferase</fullName>
    </alternativeName>
    <alternativeName>
        <fullName>GFAT</fullName>
    </alternativeName>
    <alternativeName>
        <fullName>Glucosamine-6-phosphate synthase</fullName>
    </alternativeName>
    <alternativeName>
        <fullName>Hexosephosphate aminotransferase</fullName>
    </alternativeName>
    <alternativeName>
        <fullName>L-glutamine--D-fructose-6-phosphate amidotransferase</fullName>
    </alternativeName>
</protein>
<gene>
    <name type="primary">glmS</name>
    <name type="ordered locus">bll4607</name>
</gene>
<reference key="1">
    <citation type="journal article" date="2002" name="DNA Res.">
        <title>Complete genomic sequence of nitrogen-fixing symbiotic bacterium Bradyrhizobium japonicum USDA110.</title>
        <authorList>
            <person name="Kaneko T."/>
            <person name="Nakamura Y."/>
            <person name="Sato S."/>
            <person name="Minamisawa K."/>
            <person name="Uchiumi T."/>
            <person name="Sasamoto S."/>
            <person name="Watanabe A."/>
            <person name="Idesawa K."/>
            <person name="Iriguchi M."/>
            <person name="Kawashima K."/>
            <person name="Kohara M."/>
            <person name="Matsumoto M."/>
            <person name="Shimpo S."/>
            <person name="Tsuruoka H."/>
            <person name="Wada T."/>
            <person name="Yamada M."/>
            <person name="Tabata S."/>
        </authorList>
    </citation>
    <scope>NUCLEOTIDE SEQUENCE [LARGE SCALE GENOMIC DNA]</scope>
    <source>
        <strain>JCM 10833 / BCRC 13528 / IAM 13628 / NBRC 14792 / USDA 110</strain>
    </source>
</reference>
<name>GLMS_BRADU</name>
<sequence length="608" mass="66370">MCGIVGILGREPVAEQLVDSLKRLEYRGYDSAGVATLEGRHLERRRAEGKLKNLEKRLEAEPLKGTTGIGHTRWATHGKPTVNNAHPHATERVAVVHNGIIENFRELREELEKNGTVFHTETDTEIVLHLVDDLLTRGNKPVEAVKLALARLRGAFALGFIFAGDNDLMIGARNGPPLAIGYGDGEMYLGSDAIALGPFTDTISYLEDGDWVVLTRNSATIFDKDGHAVQREKIKHAASTSLVDKANYRHFMAKEIHEQPEVVGHTLARYVDMATERVSLPVKLPFDFKNIQRINITACGTASYAGFVAKYWFERFARLPVEVDVASEFRYREAPLRKGDLAIFISQSGETADTLAALRYAKAEGVHTVAVVNVPTSTIARESETVLPTLAGPEIGVASTKAFTCQLMVLANLAIAAGKARGELSDEDETKLVHGLVEIPRLMSDALTTELQIEKLAREIAKSRDVLYLGRGTSFPLALEGALKLKEISYIHAEGYAAGELKHGPIALIDETMPVVVIAPYDRVFEKTVSNMQEVAARGGKIILMTDAKGAEEATVESLVTIVMPDMAAAFTPMVYAVPVQLLAYHTAVIMGTDVDQPRNLAKSVTVE</sequence>
<accession>P59362</accession>
<organism>
    <name type="scientific">Bradyrhizobium diazoefficiens (strain JCM 10833 / BCRC 13528 / IAM 13628 / NBRC 14792 / USDA 110)</name>
    <dbReference type="NCBI Taxonomy" id="224911"/>
    <lineage>
        <taxon>Bacteria</taxon>
        <taxon>Pseudomonadati</taxon>
        <taxon>Pseudomonadota</taxon>
        <taxon>Alphaproteobacteria</taxon>
        <taxon>Hyphomicrobiales</taxon>
        <taxon>Nitrobacteraceae</taxon>
        <taxon>Bradyrhizobium</taxon>
    </lineage>
</organism>
<feature type="initiator methionine" description="Removed" evidence="1">
    <location>
        <position position="1"/>
    </location>
</feature>
<feature type="chain" id="PRO_0000135307" description="Glutamine--fructose-6-phosphate aminotransferase [isomerizing]">
    <location>
        <begin position="2"/>
        <end position="608"/>
    </location>
</feature>
<feature type="domain" description="Glutamine amidotransferase type-2">
    <location>
        <begin position="2"/>
        <end position="217"/>
    </location>
</feature>
<feature type="domain" description="SIS 1">
    <location>
        <begin position="284"/>
        <end position="423"/>
    </location>
</feature>
<feature type="domain" description="SIS 2">
    <location>
        <begin position="456"/>
        <end position="598"/>
    </location>
</feature>
<feature type="active site" description="Nucleophile; for GATase activity" evidence="1">
    <location>
        <position position="2"/>
    </location>
</feature>
<feature type="active site" description="For Fru-6P isomerization activity" evidence="1">
    <location>
        <position position="603"/>
    </location>
</feature>